<feature type="transit peptide" description="Mitochondrion" evidence="1">
    <location>
        <begin position="1"/>
        <end position="42"/>
    </location>
</feature>
<feature type="chain" id="PRO_0000402899" description="Translation factor GUF1, mitochondrial">
    <location>
        <begin position="43"/>
        <end position="660"/>
    </location>
</feature>
<feature type="domain" description="tr-type G">
    <location>
        <begin position="62"/>
        <end position="242"/>
    </location>
</feature>
<feature type="binding site" evidence="1">
    <location>
        <begin position="71"/>
        <end position="78"/>
    </location>
    <ligand>
        <name>GTP</name>
        <dbReference type="ChEBI" id="CHEBI:37565"/>
    </ligand>
</feature>
<feature type="binding site" evidence="1">
    <location>
        <begin position="135"/>
        <end position="139"/>
    </location>
    <ligand>
        <name>GTP</name>
        <dbReference type="ChEBI" id="CHEBI:37565"/>
    </ligand>
</feature>
<feature type="binding site" evidence="1">
    <location>
        <begin position="189"/>
        <end position="192"/>
    </location>
    <ligand>
        <name>GTP</name>
        <dbReference type="ChEBI" id="CHEBI:37565"/>
    </ligand>
</feature>
<evidence type="ECO:0000255" key="1">
    <source>
        <dbReference type="HAMAP-Rule" id="MF_03137"/>
    </source>
</evidence>
<evidence type="ECO:0000305" key="2"/>
<comment type="function">
    <text evidence="1">Promotes mitochondrial protein synthesis. May act as a fidelity factor of the translation reaction, by catalyzing a one-codon backward translocation of tRNAs on improperly translocated ribosomes. Binds to mitochondrial ribosomes in a GTP-dependent manner.</text>
</comment>
<comment type="catalytic activity">
    <reaction evidence="1">
        <text>GTP + H2O = GDP + phosphate + H(+)</text>
        <dbReference type="Rhea" id="RHEA:19669"/>
        <dbReference type="ChEBI" id="CHEBI:15377"/>
        <dbReference type="ChEBI" id="CHEBI:15378"/>
        <dbReference type="ChEBI" id="CHEBI:37565"/>
        <dbReference type="ChEBI" id="CHEBI:43474"/>
        <dbReference type="ChEBI" id="CHEBI:58189"/>
    </reaction>
</comment>
<comment type="subcellular location">
    <subcellularLocation>
        <location evidence="1">Mitochondrion inner membrane</location>
        <topology evidence="1">Peripheral membrane protein</topology>
        <orientation evidence="1">Matrix side</orientation>
    </subcellularLocation>
</comment>
<comment type="similarity">
    <text evidence="2">Belongs to the TRAFAC class translation factor GTPase superfamily. Classic translation factor GTPase family. LepA subfamily.</text>
</comment>
<gene>
    <name evidence="1" type="primary">GUF1</name>
    <name type="ORF">SNOG_01420</name>
</gene>
<sequence length="660" mass="73723">MRSCVRTASSVLQSWRAHTVLRNGCPLPSRTLERLPRLARSYAMAYKPQGELEKRIAEIPIERYRNFCIVAHVDHGKSTLSDRLLELTGTIQPGGNKQILDRLDVERERGITVKAQTCSMIYNYQGDDYLLHLVDTPGHVDFRAEVSRSYASCGGALLLVDASQGVQAQTVANFYLAFSQGLTLVPVLNKVDLPHADPPRVLEQMHDTFELDPEAAVLVSAKTGLNVASLLPAVVEKIPAPVGDLSKPLRMLLVDSWYDVYKGVILLVRVFDGQVRPGDTIRSFATGLKYIVGEVGIMYPDQTPQTVLKAGQVGYIHFNPGMKKSQEAKVGDTYTTLGSEKLVEPYPGFEEPKSMVFVAAYPTDQDNHEHLEDSIEQITLNDRSVTLQKESSDALGAGWRLGFLGTLHCSVFEDRLRQEHGANIIITPPSVPFKVIWRDGTESIITNPNEFPDQDQAHFRVQEVHEPYVQATITLPDEYLGEVIKLCESNRGEQKELTFFTATQVILKYDIPLSHLVDDFFGKLKGATKGYASLDYEDAGFHKSSIVKLNLLVNGAPVDAVSRVLHTSQVDKVGRAWVEKFKVHVERQMFEVIIQAAAGRRIVARATIKPFRKDVLAKLHASDLSRRRKLLEKQKEGRKKLRAVGSVVIEQEAFQKFLAK</sequence>
<reference key="1">
    <citation type="journal article" date="2007" name="Plant Cell">
        <title>Dothideomycete-plant interactions illuminated by genome sequencing and EST analysis of the wheat pathogen Stagonospora nodorum.</title>
        <authorList>
            <person name="Hane J.K."/>
            <person name="Lowe R.G.T."/>
            <person name="Solomon P.S."/>
            <person name="Tan K.-C."/>
            <person name="Schoch C.L."/>
            <person name="Spatafora J.W."/>
            <person name="Crous P.W."/>
            <person name="Kodira C.D."/>
            <person name="Birren B.W."/>
            <person name="Galagan J.E."/>
            <person name="Torriani S.F.F."/>
            <person name="McDonald B.A."/>
            <person name="Oliver R.P."/>
        </authorList>
    </citation>
    <scope>NUCLEOTIDE SEQUENCE [LARGE SCALE GENOMIC DNA]</scope>
    <source>
        <strain>SN15 / ATCC MYA-4574 / FGSC 10173</strain>
    </source>
</reference>
<keyword id="KW-0342">GTP-binding</keyword>
<keyword id="KW-0378">Hydrolase</keyword>
<keyword id="KW-0472">Membrane</keyword>
<keyword id="KW-0496">Mitochondrion</keyword>
<keyword id="KW-0999">Mitochondrion inner membrane</keyword>
<keyword id="KW-0547">Nucleotide-binding</keyword>
<keyword id="KW-0648">Protein biosynthesis</keyword>
<keyword id="KW-0809">Transit peptide</keyword>
<dbReference type="EC" id="3.6.5.-"/>
<dbReference type="EMBL" id="CH445326">
    <property type="protein sequence ID" value="EAT91069.2"/>
    <property type="molecule type" value="Genomic_DNA"/>
</dbReference>
<dbReference type="RefSeq" id="XP_001792061.1">
    <property type="nucleotide sequence ID" value="XM_001792009.1"/>
</dbReference>
<dbReference type="SMR" id="Q0V3J4"/>
<dbReference type="FunCoup" id="Q0V3J4">
    <property type="interactions" value="671"/>
</dbReference>
<dbReference type="STRING" id="321614.Q0V3J4"/>
<dbReference type="EnsemblFungi" id="SNOT_01420">
    <property type="protein sequence ID" value="SNOT_01420"/>
    <property type="gene ID" value="SNOG_01420"/>
</dbReference>
<dbReference type="GeneID" id="5968906"/>
<dbReference type="KEGG" id="pno:SNOG_01420"/>
<dbReference type="VEuPathDB" id="FungiDB:JI435_014200"/>
<dbReference type="eggNOG" id="KOG0462">
    <property type="taxonomic scope" value="Eukaryota"/>
</dbReference>
<dbReference type="HOGENOM" id="CLU_009995_3_1_1"/>
<dbReference type="InParanoid" id="Q0V3J4"/>
<dbReference type="Proteomes" id="UP000001055">
    <property type="component" value="Unassembled WGS sequence"/>
</dbReference>
<dbReference type="GO" id="GO:0005743">
    <property type="term" value="C:mitochondrial inner membrane"/>
    <property type="evidence" value="ECO:0007669"/>
    <property type="project" value="UniProtKB-SubCell"/>
</dbReference>
<dbReference type="GO" id="GO:0005759">
    <property type="term" value="C:mitochondrial matrix"/>
    <property type="evidence" value="ECO:0007669"/>
    <property type="project" value="UniProtKB-UniRule"/>
</dbReference>
<dbReference type="GO" id="GO:0005739">
    <property type="term" value="C:mitochondrion"/>
    <property type="evidence" value="ECO:0000318"/>
    <property type="project" value="GO_Central"/>
</dbReference>
<dbReference type="GO" id="GO:0005525">
    <property type="term" value="F:GTP binding"/>
    <property type="evidence" value="ECO:0007669"/>
    <property type="project" value="UniProtKB-UniRule"/>
</dbReference>
<dbReference type="GO" id="GO:0003924">
    <property type="term" value="F:GTPase activity"/>
    <property type="evidence" value="ECO:0007669"/>
    <property type="project" value="UniProtKB-UniRule"/>
</dbReference>
<dbReference type="GO" id="GO:0097177">
    <property type="term" value="F:mitochondrial ribosome binding"/>
    <property type="evidence" value="ECO:0000318"/>
    <property type="project" value="GO_Central"/>
</dbReference>
<dbReference type="GO" id="GO:0045727">
    <property type="term" value="P:positive regulation of translation"/>
    <property type="evidence" value="ECO:0000318"/>
    <property type="project" value="GO_Central"/>
</dbReference>
<dbReference type="GO" id="GO:0006412">
    <property type="term" value="P:translation"/>
    <property type="evidence" value="ECO:0007669"/>
    <property type="project" value="UniProtKB-KW"/>
</dbReference>
<dbReference type="CDD" id="cd03699">
    <property type="entry name" value="EF4_II"/>
    <property type="match status" value="1"/>
</dbReference>
<dbReference type="CDD" id="cd01890">
    <property type="entry name" value="LepA"/>
    <property type="match status" value="1"/>
</dbReference>
<dbReference type="CDD" id="cd03709">
    <property type="entry name" value="lepA_C"/>
    <property type="match status" value="1"/>
</dbReference>
<dbReference type="FunFam" id="3.40.50.300:FF:000078">
    <property type="entry name" value="Elongation factor 4"/>
    <property type="match status" value="1"/>
</dbReference>
<dbReference type="FunFam" id="2.40.30.10:FF:000015">
    <property type="entry name" value="Translation factor GUF1, mitochondrial"/>
    <property type="match status" value="1"/>
</dbReference>
<dbReference type="FunFam" id="3.30.70.240:FF:000007">
    <property type="entry name" value="Translation factor GUF1, mitochondrial"/>
    <property type="match status" value="1"/>
</dbReference>
<dbReference type="FunFam" id="3.30.70.2570:FF:000001">
    <property type="entry name" value="Translation factor GUF1, mitochondrial"/>
    <property type="match status" value="1"/>
</dbReference>
<dbReference type="FunFam" id="3.30.70.870:FF:000004">
    <property type="entry name" value="Translation factor GUF1, mitochondrial"/>
    <property type="match status" value="1"/>
</dbReference>
<dbReference type="Gene3D" id="3.30.70.240">
    <property type="match status" value="1"/>
</dbReference>
<dbReference type="Gene3D" id="3.30.70.2570">
    <property type="entry name" value="Elongation factor 4, C-terminal domain"/>
    <property type="match status" value="1"/>
</dbReference>
<dbReference type="Gene3D" id="3.30.70.870">
    <property type="entry name" value="Elongation Factor G (Translational Gtpase), domain 3"/>
    <property type="match status" value="1"/>
</dbReference>
<dbReference type="Gene3D" id="3.40.50.300">
    <property type="entry name" value="P-loop containing nucleotide triphosphate hydrolases"/>
    <property type="match status" value="1"/>
</dbReference>
<dbReference type="Gene3D" id="2.40.30.10">
    <property type="entry name" value="Translation factors"/>
    <property type="match status" value="1"/>
</dbReference>
<dbReference type="HAMAP" id="MF_00071">
    <property type="entry name" value="LepA"/>
    <property type="match status" value="1"/>
</dbReference>
<dbReference type="InterPro" id="IPR006297">
    <property type="entry name" value="EF-4"/>
</dbReference>
<dbReference type="InterPro" id="IPR035647">
    <property type="entry name" value="EFG_III/V"/>
</dbReference>
<dbReference type="InterPro" id="IPR000640">
    <property type="entry name" value="EFG_V-like"/>
</dbReference>
<dbReference type="InterPro" id="IPR004161">
    <property type="entry name" value="EFTu-like_2"/>
</dbReference>
<dbReference type="InterPro" id="IPR031157">
    <property type="entry name" value="G_TR_CS"/>
</dbReference>
<dbReference type="InterPro" id="IPR038363">
    <property type="entry name" value="LepA_C_sf"/>
</dbReference>
<dbReference type="InterPro" id="IPR013842">
    <property type="entry name" value="LepA_CTD"/>
</dbReference>
<dbReference type="InterPro" id="IPR035654">
    <property type="entry name" value="LepA_IV"/>
</dbReference>
<dbReference type="InterPro" id="IPR027417">
    <property type="entry name" value="P-loop_NTPase"/>
</dbReference>
<dbReference type="InterPro" id="IPR005225">
    <property type="entry name" value="Small_GTP-bd"/>
</dbReference>
<dbReference type="InterPro" id="IPR000795">
    <property type="entry name" value="T_Tr_GTP-bd_dom"/>
</dbReference>
<dbReference type="InterPro" id="IPR009000">
    <property type="entry name" value="Transl_B-barrel_sf"/>
</dbReference>
<dbReference type="NCBIfam" id="TIGR01393">
    <property type="entry name" value="lepA"/>
    <property type="match status" value="1"/>
</dbReference>
<dbReference type="NCBIfam" id="TIGR00231">
    <property type="entry name" value="small_GTP"/>
    <property type="match status" value="1"/>
</dbReference>
<dbReference type="PANTHER" id="PTHR43512:SF7">
    <property type="entry name" value="TRANSLATION FACTOR GUF1, MITOCHONDRIAL"/>
    <property type="match status" value="1"/>
</dbReference>
<dbReference type="PANTHER" id="PTHR43512">
    <property type="entry name" value="TRANSLATION FACTOR GUF1-RELATED"/>
    <property type="match status" value="1"/>
</dbReference>
<dbReference type="Pfam" id="PF00679">
    <property type="entry name" value="EFG_C"/>
    <property type="match status" value="1"/>
</dbReference>
<dbReference type="Pfam" id="PF00009">
    <property type="entry name" value="GTP_EFTU"/>
    <property type="match status" value="1"/>
</dbReference>
<dbReference type="Pfam" id="PF03144">
    <property type="entry name" value="GTP_EFTU_D2"/>
    <property type="match status" value="1"/>
</dbReference>
<dbReference type="Pfam" id="PF06421">
    <property type="entry name" value="LepA_C"/>
    <property type="match status" value="1"/>
</dbReference>
<dbReference type="PRINTS" id="PR00315">
    <property type="entry name" value="ELONGATNFCT"/>
</dbReference>
<dbReference type="SUPFAM" id="SSF54980">
    <property type="entry name" value="EF-G C-terminal domain-like"/>
    <property type="match status" value="2"/>
</dbReference>
<dbReference type="SUPFAM" id="SSF52540">
    <property type="entry name" value="P-loop containing nucleoside triphosphate hydrolases"/>
    <property type="match status" value="1"/>
</dbReference>
<dbReference type="SUPFAM" id="SSF50447">
    <property type="entry name" value="Translation proteins"/>
    <property type="match status" value="1"/>
</dbReference>
<dbReference type="PROSITE" id="PS00301">
    <property type="entry name" value="G_TR_1"/>
    <property type="match status" value="1"/>
</dbReference>
<dbReference type="PROSITE" id="PS51722">
    <property type="entry name" value="G_TR_2"/>
    <property type="match status" value="1"/>
</dbReference>
<protein>
    <recommendedName>
        <fullName evidence="1">Translation factor GUF1, mitochondrial</fullName>
        <ecNumber>3.6.5.-</ecNumber>
    </recommendedName>
    <alternativeName>
        <fullName evidence="1">Elongation factor 4 homolog</fullName>
        <shortName evidence="1">EF-4</shortName>
    </alternativeName>
    <alternativeName>
        <fullName evidence="1">GTPase GUF1</fullName>
    </alternativeName>
    <alternativeName>
        <fullName evidence="1">Ribosomal back-translocase</fullName>
    </alternativeName>
</protein>
<name>GUF1_PHANO</name>
<accession>Q0V3J4</accession>
<organism>
    <name type="scientific">Phaeosphaeria nodorum (strain SN15 / ATCC MYA-4574 / FGSC 10173)</name>
    <name type="common">Glume blotch fungus</name>
    <name type="synonym">Parastagonospora nodorum</name>
    <dbReference type="NCBI Taxonomy" id="321614"/>
    <lineage>
        <taxon>Eukaryota</taxon>
        <taxon>Fungi</taxon>
        <taxon>Dikarya</taxon>
        <taxon>Ascomycota</taxon>
        <taxon>Pezizomycotina</taxon>
        <taxon>Dothideomycetes</taxon>
        <taxon>Pleosporomycetidae</taxon>
        <taxon>Pleosporales</taxon>
        <taxon>Pleosporineae</taxon>
        <taxon>Phaeosphaeriaceae</taxon>
        <taxon>Parastagonospora</taxon>
    </lineage>
</organism>
<proteinExistence type="inferred from homology"/>